<gene>
    <name evidence="2" type="primary">rpsL</name>
    <name type="ordered locus">Mpe_A3448</name>
</gene>
<proteinExistence type="inferred from homology"/>
<name>RS12_METPP</name>
<keyword id="KW-0488">Methylation</keyword>
<keyword id="KW-1185">Reference proteome</keyword>
<keyword id="KW-0687">Ribonucleoprotein</keyword>
<keyword id="KW-0689">Ribosomal protein</keyword>
<keyword id="KW-0694">RNA-binding</keyword>
<keyword id="KW-0699">rRNA-binding</keyword>
<keyword id="KW-0820">tRNA-binding</keyword>
<dbReference type="EMBL" id="CP000555">
    <property type="protein sequence ID" value="ABM96401.1"/>
    <property type="molecule type" value="Genomic_DNA"/>
</dbReference>
<dbReference type="RefSeq" id="WP_011831022.1">
    <property type="nucleotide sequence ID" value="NC_008825.1"/>
</dbReference>
<dbReference type="SMR" id="A2SLG2"/>
<dbReference type="STRING" id="420662.Mpe_A3448"/>
<dbReference type="KEGG" id="mpt:Mpe_A3448"/>
<dbReference type="eggNOG" id="COG0048">
    <property type="taxonomic scope" value="Bacteria"/>
</dbReference>
<dbReference type="HOGENOM" id="CLU_104295_1_2_4"/>
<dbReference type="Proteomes" id="UP000000366">
    <property type="component" value="Chromosome"/>
</dbReference>
<dbReference type="GO" id="GO:0015935">
    <property type="term" value="C:small ribosomal subunit"/>
    <property type="evidence" value="ECO:0007669"/>
    <property type="project" value="InterPro"/>
</dbReference>
<dbReference type="GO" id="GO:0019843">
    <property type="term" value="F:rRNA binding"/>
    <property type="evidence" value="ECO:0007669"/>
    <property type="project" value="UniProtKB-UniRule"/>
</dbReference>
<dbReference type="GO" id="GO:0003735">
    <property type="term" value="F:structural constituent of ribosome"/>
    <property type="evidence" value="ECO:0007669"/>
    <property type="project" value="InterPro"/>
</dbReference>
<dbReference type="GO" id="GO:0000049">
    <property type="term" value="F:tRNA binding"/>
    <property type="evidence" value="ECO:0007669"/>
    <property type="project" value="UniProtKB-UniRule"/>
</dbReference>
<dbReference type="GO" id="GO:0006412">
    <property type="term" value="P:translation"/>
    <property type="evidence" value="ECO:0007669"/>
    <property type="project" value="UniProtKB-UniRule"/>
</dbReference>
<dbReference type="CDD" id="cd03368">
    <property type="entry name" value="Ribosomal_S12"/>
    <property type="match status" value="1"/>
</dbReference>
<dbReference type="FunFam" id="2.40.50.140:FF:000001">
    <property type="entry name" value="30S ribosomal protein S12"/>
    <property type="match status" value="1"/>
</dbReference>
<dbReference type="Gene3D" id="2.40.50.140">
    <property type="entry name" value="Nucleic acid-binding proteins"/>
    <property type="match status" value="1"/>
</dbReference>
<dbReference type="HAMAP" id="MF_00403_B">
    <property type="entry name" value="Ribosomal_uS12_B"/>
    <property type="match status" value="1"/>
</dbReference>
<dbReference type="InterPro" id="IPR012340">
    <property type="entry name" value="NA-bd_OB-fold"/>
</dbReference>
<dbReference type="InterPro" id="IPR006032">
    <property type="entry name" value="Ribosomal_uS12"/>
</dbReference>
<dbReference type="InterPro" id="IPR005679">
    <property type="entry name" value="Ribosomal_uS12_bac"/>
</dbReference>
<dbReference type="NCBIfam" id="TIGR00981">
    <property type="entry name" value="rpsL_bact"/>
    <property type="match status" value="1"/>
</dbReference>
<dbReference type="PANTHER" id="PTHR11652">
    <property type="entry name" value="30S RIBOSOMAL PROTEIN S12 FAMILY MEMBER"/>
    <property type="match status" value="1"/>
</dbReference>
<dbReference type="Pfam" id="PF00164">
    <property type="entry name" value="Ribosom_S12_S23"/>
    <property type="match status" value="1"/>
</dbReference>
<dbReference type="PIRSF" id="PIRSF002133">
    <property type="entry name" value="Ribosomal_S12/S23"/>
    <property type="match status" value="1"/>
</dbReference>
<dbReference type="PRINTS" id="PR01034">
    <property type="entry name" value="RIBOSOMALS12"/>
</dbReference>
<dbReference type="SUPFAM" id="SSF50249">
    <property type="entry name" value="Nucleic acid-binding proteins"/>
    <property type="match status" value="1"/>
</dbReference>
<dbReference type="PROSITE" id="PS00055">
    <property type="entry name" value="RIBOSOMAL_S12"/>
    <property type="match status" value="1"/>
</dbReference>
<feature type="chain" id="PRO_0000295998" description="Small ribosomal subunit protein uS12">
    <location>
        <begin position="1"/>
        <end position="125"/>
    </location>
</feature>
<feature type="region of interest" description="Disordered" evidence="3">
    <location>
        <begin position="1"/>
        <end position="31"/>
    </location>
</feature>
<feature type="region of interest" description="Disordered" evidence="3">
    <location>
        <begin position="105"/>
        <end position="125"/>
    </location>
</feature>
<feature type="compositionally biased region" description="Basic residues" evidence="3">
    <location>
        <begin position="113"/>
        <end position="125"/>
    </location>
</feature>
<feature type="modified residue" description="3-methylthioaspartic acid" evidence="1">
    <location>
        <position position="89"/>
    </location>
</feature>
<protein>
    <recommendedName>
        <fullName evidence="2">Small ribosomal subunit protein uS12</fullName>
    </recommendedName>
    <alternativeName>
        <fullName evidence="4">30S ribosomal protein S12</fullName>
    </alternativeName>
</protein>
<sequence length="125" mass="13885">MPTINQLVRHGRQTEVTKSKSPAMQGGPQRRGVCTRVYTTTPKKPNSALRKVAKVRLTNGFEVISYIGGEGHNLQEHSVVLVRGGRVKDLPGVRYHIVRGSLDLQGVKDRKQSRSKYGAKRPKKA</sequence>
<comment type="function">
    <text evidence="2">With S4 and S5 plays an important role in translational accuracy.</text>
</comment>
<comment type="function">
    <text evidence="2">Interacts with and stabilizes bases of the 16S rRNA that are involved in tRNA selection in the A site and with the mRNA backbone. Located at the interface of the 30S and 50S subunits, it traverses the body of the 30S subunit contacting proteins on the other side and probably holding the rRNA structure together. The combined cluster of proteins S8, S12 and S17 appears to hold together the shoulder and platform of the 30S subunit.</text>
</comment>
<comment type="subunit">
    <text evidence="2">Part of the 30S ribosomal subunit. Contacts proteins S8 and S17. May interact with IF1 in the 30S initiation complex.</text>
</comment>
<comment type="similarity">
    <text evidence="2">Belongs to the universal ribosomal protein uS12 family.</text>
</comment>
<reference key="1">
    <citation type="journal article" date="2007" name="J. Bacteriol.">
        <title>Whole-genome analysis of the methyl tert-butyl ether-degrading beta-proteobacterium Methylibium petroleiphilum PM1.</title>
        <authorList>
            <person name="Kane S.R."/>
            <person name="Chakicherla A.Y."/>
            <person name="Chain P.S.G."/>
            <person name="Schmidt R."/>
            <person name="Shin M.W."/>
            <person name="Legler T.C."/>
            <person name="Scow K.M."/>
            <person name="Larimer F.W."/>
            <person name="Lucas S.M."/>
            <person name="Richardson P.M."/>
            <person name="Hristova K.R."/>
        </authorList>
    </citation>
    <scope>NUCLEOTIDE SEQUENCE [LARGE SCALE GENOMIC DNA]</scope>
    <source>
        <strain>ATCC BAA-1232 / LMG 22953 / PM1</strain>
    </source>
</reference>
<accession>A2SLG2</accession>
<evidence type="ECO:0000250" key="1"/>
<evidence type="ECO:0000255" key="2">
    <source>
        <dbReference type="HAMAP-Rule" id="MF_00403"/>
    </source>
</evidence>
<evidence type="ECO:0000256" key="3">
    <source>
        <dbReference type="SAM" id="MobiDB-lite"/>
    </source>
</evidence>
<evidence type="ECO:0000305" key="4"/>
<organism>
    <name type="scientific">Methylibium petroleiphilum (strain ATCC BAA-1232 / LMG 22953 / PM1)</name>
    <dbReference type="NCBI Taxonomy" id="420662"/>
    <lineage>
        <taxon>Bacteria</taxon>
        <taxon>Pseudomonadati</taxon>
        <taxon>Pseudomonadota</taxon>
        <taxon>Betaproteobacteria</taxon>
        <taxon>Burkholderiales</taxon>
        <taxon>Sphaerotilaceae</taxon>
        <taxon>Methylibium</taxon>
    </lineage>
</organism>